<accession>A7MGF3</accession>
<gene>
    <name evidence="1" type="primary">glgX</name>
    <name type="ordered locus">ESA_04310</name>
</gene>
<reference key="1">
    <citation type="journal article" date="2010" name="PLoS ONE">
        <title>Genome sequence of Cronobacter sakazakii BAA-894 and comparative genomic hybridization analysis with other Cronobacter species.</title>
        <authorList>
            <person name="Kucerova E."/>
            <person name="Clifton S.W."/>
            <person name="Xia X.Q."/>
            <person name="Long F."/>
            <person name="Porwollik S."/>
            <person name="Fulton L."/>
            <person name="Fronick C."/>
            <person name="Minx P."/>
            <person name="Kyung K."/>
            <person name="Warren W."/>
            <person name="Fulton R."/>
            <person name="Feng D."/>
            <person name="Wollam A."/>
            <person name="Shah N."/>
            <person name="Bhonagiri V."/>
            <person name="Nash W.E."/>
            <person name="Hallsworth-Pepin K."/>
            <person name="Wilson R.K."/>
            <person name="McClelland M."/>
            <person name="Forsythe S.J."/>
        </authorList>
    </citation>
    <scope>NUCLEOTIDE SEQUENCE [LARGE SCALE GENOMIC DNA]</scope>
    <source>
        <strain>ATCC BAA-894</strain>
    </source>
</reference>
<sequence>MMQLNAGHSAPPGAWFDGAGVNFTLFSAHAEKVELCLFDESGNETRYALPARSGDVWHGYLPGARPGLRYGYRVHGPWNPAQGHRFNPAKLLLDPCARGVEGDVIDDPRLYGGIDTPDPRDNRDAMPKSVVMDDRYDWEDDAPPNIAWGETVIYEAHVRGLTRLHPDIPPALRGTYAALGHPAMIAWFQRLGITALELQPVAKFCSEPRLQRLGLANYWGYNPLALWAIETRYASQPAPQAALNEFRDAVKALHKAGIEVILDVVLNHSAELDLEGPTFSLRGIDNRSYYWIQDDGDYHNWTGCGNTLNLSHPAVVDYAIGCLKFWVEQCHVDGFRFDLATVMGRTPEFRQDAPLFEAMRRDRSLSAVKLIVEPWDIGPGGYQVGNYPPPFAEWNDRFRDDMRRFWLRSELDVGEVATRVAASADVYRRNGREPWACVNLVTAHDGFTLRDCVSFNGKHNEANGEDNRDGAWENHSNNHGYEGLGGGQSVQDARRASTHALLASLLLSQGTPMLLAGDEQGHSQHGNNNAYCQDNELTWFDWSQADEGLVAYTAALIRLRRQIPALTASRWWEENDGNVRWLNAAGAPMRPEEWHSGTRQLQILLSDRWLVTLNGRDEVSEIVLPEGEWRAVPPFAGEDNPVVMAVWHGPAHGVCVFRKS</sequence>
<evidence type="ECO:0000255" key="1">
    <source>
        <dbReference type="HAMAP-Rule" id="MF_01248"/>
    </source>
</evidence>
<evidence type="ECO:0000256" key="2">
    <source>
        <dbReference type="SAM" id="MobiDB-lite"/>
    </source>
</evidence>
<dbReference type="EC" id="3.2.1.196" evidence="1"/>
<dbReference type="EMBL" id="CP000783">
    <property type="protein sequence ID" value="ABU79489.1"/>
    <property type="molecule type" value="Genomic_DNA"/>
</dbReference>
<dbReference type="RefSeq" id="WP_012126370.1">
    <property type="nucleotide sequence ID" value="NC_009778.1"/>
</dbReference>
<dbReference type="SMR" id="A7MGF3"/>
<dbReference type="CAZy" id="CBM48">
    <property type="family name" value="Carbohydrate-Binding Module Family 48"/>
</dbReference>
<dbReference type="CAZy" id="GH13">
    <property type="family name" value="Glycoside Hydrolase Family 13"/>
</dbReference>
<dbReference type="KEGG" id="esa:ESA_04310"/>
<dbReference type="PATRIC" id="fig|290339.8.peg.3837"/>
<dbReference type="HOGENOM" id="CLU_011725_1_1_6"/>
<dbReference type="UniPathway" id="UPA00165"/>
<dbReference type="Proteomes" id="UP000000260">
    <property type="component" value="Chromosome"/>
</dbReference>
<dbReference type="GO" id="GO:0004133">
    <property type="term" value="F:glycogen debranching enzyme activity"/>
    <property type="evidence" value="ECO:0007669"/>
    <property type="project" value="UniProtKB-UniRule"/>
</dbReference>
<dbReference type="GO" id="GO:0004553">
    <property type="term" value="F:hydrolase activity, hydrolyzing O-glycosyl compounds"/>
    <property type="evidence" value="ECO:0007669"/>
    <property type="project" value="InterPro"/>
</dbReference>
<dbReference type="GO" id="GO:0005980">
    <property type="term" value="P:glycogen catabolic process"/>
    <property type="evidence" value="ECO:0007669"/>
    <property type="project" value="UniProtKB-UniRule"/>
</dbReference>
<dbReference type="CDD" id="cd11326">
    <property type="entry name" value="AmyAc_Glg_debranch"/>
    <property type="match status" value="1"/>
</dbReference>
<dbReference type="CDD" id="cd02856">
    <property type="entry name" value="E_set_GDE_Isoamylase_N"/>
    <property type="match status" value="1"/>
</dbReference>
<dbReference type="Gene3D" id="3.20.20.80">
    <property type="entry name" value="Glycosidases"/>
    <property type="match status" value="1"/>
</dbReference>
<dbReference type="Gene3D" id="2.60.40.1180">
    <property type="entry name" value="Golgi alpha-mannosidase II"/>
    <property type="match status" value="1"/>
</dbReference>
<dbReference type="Gene3D" id="2.60.40.10">
    <property type="entry name" value="Immunoglobulins"/>
    <property type="match status" value="1"/>
</dbReference>
<dbReference type="HAMAP" id="MF_01248">
    <property type="entry name" value="GlgX"/>
    <property type="match status" value="1"/>
</dbReference>
<dbReference type="InterPro" id="IPR040784">
    <property type="entry name" value="GlgX_C"/>
</dbReference>
<dbReference type="InterPro" id="IPR044505">
    <property type="entry name" value="GlgX_Isoamylase_N_E_set"/>
</dbReference>
<dbReference type="InterPro" id="IPR006047">
    <property type="entry name" value="Glyco_hydro_13_cat_dom"/>
</dbReference>
<dbReference type="InterPro" id="IPR004193">
    <property type="entry name" value="Glyco_hydro_13_N"/>
</dbReference>
<dbReference type="InterPro" id="IPR013780">
    <property type="entry name" value="Glyco_hydro_b"/>
</dbReference>
<dbReference type="InterPro" id="IPR022844">
    <property type="entry name" value="Glycogen_debranch_bac"/>
</dbReference>
<dbReference type="InterPro" id="IPR011837">
    <property type="entry name" value="Glycogen_debranch_GlgX"/>
</dbReference>
<dbReference type="InterPro" id="IPR017853">
    <property type="entry name" value="Glycoside_hydrolase_SF"/>
</dbReference>
<dbReference type="InterPro" id="IPR013783">
    <property type="entry name" value="Ig-like_fold"/>
</dbReference>
<dbReference type="InterPro" id="IPR014756">
    <property type="entry name" value="Ig_E-set"/>
</dbReference>
<dbReference type="NCBIfam" id="TIGR02100">
    <property type="entry name" value="glgX_debranch"/>
    <property type="match status" value="1"/>
</dbReference>
<dbReference type="NCBIfam" id="NF002983">
    <property type="entry name" value="PRK03705.1"/>
    <property type="match status" value="1"/>
</dbReference>
<dbReference type="PANTHER" id="PTHR43002">
    <property type="entry name" value="GLYCOGEN DEBRANCHING ENZYME"/>
    <property type="match status" value="1"/>
</dbReference>
<dbReference type="Pfam" id="PF00128">
    <property type="entry name" value="Alpha-amylase"/>
    <property type="match status" value="1"/>
</dbReference>
<dbReference type="Pfam" id="PF02922">
    <property type="entry name" value="CBM_48"/>
    <property type="match status" value="1"/>
</dbReference>
<dbReference type="Pfam" id="PF18390">
    <property type="entry name" value="GlgX_C"/>
    <property type="match status" value="1"/>
</dbReference>
<dbReference type="SMART" id="SM00642">
    <property type="entry name" value="Aamy"/>
    <property type="match status" value="1"/>
</dbReference>
<dbReference type="SUPFAM" id="SSF51445">
    <property type="entry name" value="(Trans)glycosidases"/>
    <property type="match status" value="1"/>
</dbReference>
<dbReference type="SUPFAM" id="SSF81296">
    <property type="entry name" value="E set domains"/>
    <property type="match status" value="1"/>
</dbReference>
<dbReference type="SUPFAM" id="SSF51011">
    <property type="entry name" value="Glycosyl hydrolase domain"/>
    <property type="match status" value="1"/>
</dbReference>
<keyword id="KW-0119">Carbohydrate metabolism</keyword>
<keyword id="KW-0321">Glycogen metabolism</keyword>
<keyword id="KW-0326">Glycosidase</keyword>
<keyword id="KW-0378">Hydrolase</keyword>
<keyword id="KW-1185">Reference proteome</keyword>
<name>GLGX_CROS8</name>
<feature type="chain" id="PRO_1000165058" description="Glycogen debranching enzyme">
    <location>
        <begin position="1"/>
        <end position="660"/>
    </location>
</feature>
<feature type="region of interest" description="Disordered" evidence="2">
    <location>
        <begin position="460"/>
        <end position="482"/>
    </location>
</feature>
<feature type="compositionally biased region" description="Basic and acidic residues" evidence="2">
    <location>
        <begin position="460"/>
        <end position="472"/>
    </location>
</feature>
<feature type="active site" description="Nucleophile" evidence="1">
    <location>
        <position position="338"/>
    </location>
</feature>
<feature type="active site" description="Proton donor" evidence="1">
    <location>
        <position position="373"/>
    </location>
</feature>
<feature type="site" description="Transition state stabilizer" evidence="1">
    <location>
        <position position="445"/>
    </location>
</feature>
<protein>
    <recommendedName>
        <fullName evidence="1">Glycogen debranching enzyme</fullName>
        <ecNumber evidence="1">3.2.1.196</ecNumber>
    </recommendedName>
    <alternativeName>
        <fullName evidence="1">Limit dextrin alpha-1,6-maltotetraose-hydrolase</fullName>
    </alternativeName>
</protein>
<proteinExistence type="inferred from homology"/>
<comment type="function">
    <text evidence="1">Removes maltotriose and maltotetraose chains that are attached by 1,6-alpha-linkage to the limit dextrin main chain, generating a debranched limit dextrin.</text>
</comment>
<comment type="catalytic activity">
    <reaction evidence="1">
        <text>Hydrolysis of (1-&gt;6)-alpha-D-glucosidic linkages to branches with degrees of polymerization of three or four glucose residues in limit dextrin.</text>
        <dbReference type="EC" id="3.2.1.196"/>
    </reaction>
</comment>
<comment type="pathway">
    <text evidence="1">Glycan degradation; glycogen degradation.</text>
</comment>
<comment type="similarity">
    <text evidence="1">Belongs to the glycosyl hydrolase 13 family.</text>
</comment>
<organism>
    <name type="scientific">Cronobacter sakazakii (strain ATCC BAA-894)</name>
    <name type="common">Enterobacter sakazakii</name>
    <dbReference type="NCBI Taxonomy" id="290339"/>
    <lineage>
        <taxon>Bacteria</taxon>
        <taxon>Pseudomonadati</taxon>
        <taxon>Pseudomonadota</taxon>
        <taxon>Gammaproteobacteria</taxon>
        <taxon>Enterobacterales</taxon>
        <taxon>Enterobacteriaceae</taxon>
        <taxon>Cronobacter</taxon>
    </lineage>
</organism>